<keyword id="KW-0028">Amino-acid biosynthesis</keyword>
<keyword id="KW-0057">Aromatic amino acid biosynthesis</keyword>
<keyword id="KW-0456">Lyase</keyword>
<keyword id="KW-0663">Pyridoxal phosphate</keyword>
<keyword id="KW-0822">Tryptophan biosynthesis</keyword>
<accession>P16706</accession>
<proteinExistence type="inferred from homology"/>
<dbReference type="EC" id="4.2.1.20"/>
<dbReference type="EMBL" id="M58444">
    <property type="protein sequence ID" value="AAA21902.1"/>
    <property type="molecule type" value="Genomic_DNA"/>
</dbReference>
<dbReference type="EMBL" id="M34485">
    <property type="protein sequence ID" value="AAA21898.1"/>
    <property type="molecule type" value="Genomic_DNA"/>
</dbReference>
<dbReference type="PIR" id="B36151">
    <property type="entry name" value="B36151"/>
</dbReference>
<dbReference type="SMR" id="P16706"/>
<dbReference type="STRING" id="471.BUM88_16525"/>
<dbReference type="UniPathway" id="UPA00035">
    <property type="reaction ID" value="UER00044"/>
</dbReference>
<dbReference type="GO" id="GO:0005737">
    <property type="term" value="C:cytoplasm"/>
    <property type="evidence" value="ECO:0007669"/>
    <property type="project" value="TreeGrafter"/>
</dbReference>
<dbReference type="GO" id="GO:0004834">
    <property type="term" value="F:tryptophan synthase activity"/>
    <property type="evidence" value="ECO:0007669"/>
    <property type="project" value="UniProtKB-UniRule"/>
</dbReference>
<dbReference type="CDD" id="cd06446">
    <property type="entry name" value="Trp-synth_B"/>
    <property type="match status" value="1"/>
</dbReference>
<dbReference type="FunFam" id="3.40.50.1100:FF:000001">
    <property type="entry name" value="Tryptophan synthase beta chain"/>
    <property type="match status" value="1"/>
</dbReference>
<dbReference type="FunFam" id="3.40.50.1100:FF:000004">
    <property type="entry name" value="Tryptophan synthase beta chain"/>
    <property type="match status" value="1"/>
</dbReference>
<dbReference type="Gene3D" id="3.40.50.1100">
    <property type="match status" value="2"/>
</dbReference>
<dbReference type="HAMAP" id="MF_00133">
    <property type="entry name" value="Trp_synth_beta"/>
    <property type="match status" value="1"/>
</dbReference>
<dbReference type="InterPro" id="IPR006653">
    <property type="entry name" value="Trp_synth_b_CS"/>
</dbReference>
<dbReference type="InterPro" id="IPR006654">
    <property type="entry name" value="Trp_synth_beta"/>
</dbReference>
<dbReference type="InterPro" id="IPR023026">
    <property type="entry name" value="Trp_synth_beta/beta-like"/>
</dbReference>
<dbReference type="InterPro" id="IPR001926">
    <property type="entry name" value="TrpB-like_PALP"/>
</dbReference>
<dbReference type="InterPro" id="IPR036052">
    <property type="entry name" value="TrpB-like_PALP_sf"/>
</dbReference>
<dbReference type="NCBIfam" id="TIGR00263">
    <property type="entry name" value="trpB"/>
    <property type="match status" value="1"/>
</dbReference>
<dbReference type="PANTHER" id="PTHR48077:SF3">
    <property type="entry name" value="TRYPTOPHAN SYNTHASE"/>
    <property type="match status" value="1"/>
</dbReference>
<dbReference type="PANTHER" id="PTHR48077">
    <property type="entry name" value="TRYPTOPHAN SYNTHASE-RELATED"/>
    <property type="match status" value="1"/>
</dbReference>
<dbReference type="Pfam" id="PF00291">
    <property type="entry name" value="PALP"/>
    <property type="match status" value="1"/>
</dbReference>
<dbReference type="PIRSF" id="PIRSF001413">
    <property type="entry name" value="Trp_syn_beta"/>
    <property type="match status" value="1"/>
</dbReference>
<dbReference type="SUPFAM" id="SSF53686">
    <property type="entry name" value="Tryptophan synthase beta subunit-like PLP-dependent enzymes"/>
    <property type="match status" value="1"/>
</dbReference>
<dbReference type="PROSITE" id="PS00168">
    <property type="entry name" value="TRP_SYNTHASE_BETA"/>
    <property type="match status" value="1"/>
</dbReference>
<sequence length="403" mass="44322">MIDYTQYPDARGHFGIHGGRFVSETLMAALEDLENLYNRMKNDEQFLAEFDRDLAYYVGRPSPLYYAERWSKKLGGAQIYLKREDLNHTGSHKVNNTIGQALLAKLSGKKRIIAETGAGQHGVATATIAARLGLECVVFMGAEDVKRQAMNVYRMRLLGATVIPVQSGSKTLKDAMNEAMRDWVTNVDSTYYVIGTVAGPHPYPQLVRDFQSIIGREARRQIQEQAGRLPDALVACVGGGSNAIGLFYPFLNDQDVKMYGVEAAGHGIETGKHSAPLNAGHVGVLHGNRTYLMSDPQGQIIETHSISAGLDYPGVGPEHSFLKDMHRVEYVPIDDNEALQGFRDLTRIEGIIPAIESAHAMAYVTKLAPTMDKDQIIIANVSGRGDKDLMTVARIDGIEMVEM</sequence>
<reference key="1">
    <citation type="journal article" date="1990" name="J. Bacteriol.">
        <title>Molecular cloning, nucleotide sequence, and promoter structure of the Acinetobacter calcoaceticus trpFB operon.</title>
        <authorList>
            <person name="Kishan V."/>
            <person name="Hillen W."/>
        </authorList>
    </citation>
    <scope>NUCLEOTIDE SEQUENCE [GENOMIC DNA]</scope>
</reference>
<reference key="2">
    <citation type="journal article" date="1990" name="Mol. Biol. Evol.">
        <title>An evolutionary comparison of Acinetobacter calcoaceticus trpF with trpF genes of several organisms.</title>
        <authorList>
            <person name="Ross C.M."/>
            <person name="Kaplan J.B."/>
            <person name="Winkler M.E."/>
            <person name="Nichols B.P."/>
        </authorList>
    </citation>
    <scope>NUCLEOTIDE SEQUENCE [GENOMIC DNA] OF 1-106</scope>
</reference>
<protein>
    <recommendedName>
        <fullName>Tryptophan synthase beta chain</fullName>
        <ecNumber>4.2.1.20</ecNumber>
    </recommendedName>
</protein>
<name>TRPB_ACICA</name>
<gene>
    <name type="primary">trpB</name>
</gene>
<evidence type="ECO:0000250" key="1"/>
<evidence type="ECO:0000305" key="2"/>
<comment type="function">
    <text evidence="1">The beta subunit is responsible for the synthesis of L-tryptophan from indole and L-serine.</text>
</comment>
<comment type="catalytic activity">
    <reaction>
        <text>(1S,2R)-1-C-(indol-3-yl)glycerol 3-phosphate + L-serine = D-glyceraldehyde 3-phosphate + L-tryptophan + H2O</text>
        <dbReference type="Rhea" id="RHEA:10532"/>
        <dbReference type="ChEBI" id="CHEBI:15377"/>
        <dbReference type="ChEBI" id="CHEBI:33384"/>
        <dbReference type="ChEBI" id="CHEBI:57912"/>
        <dbReference type="ChEBI" id="CHEBI:58866"/>
        <dbReference type="ChEBI" id="CHEBI:59776"/>
        <dbReference type="EC" id="4.2.1.20"/>
    </reaction>
</comment>
<comment type="cofactor">
    <cofactor evidence="1">
        <name>pyridoxal 5'-phosphate</name>
        <dbReference type="ChEBI" id="CHEBI:597326"/>
    </cofactor>
</comment>
<comment type="pathway">
    <text>Amino-acid biosynthesis; L-tryptophan biosynthesis; L-tryptophan from chorismate: step 5/5.</text>
</comment>
<comment type="subunit">
    <text evidence="1">Tetramer of two alpha and two beta chains.</text>
</comment>
<comment type="similarity">
    <text evidence="2">Belongs to the TrpB family.</text>
</comment>
<organism>
    <name type="scientific">Acinetobacter calcoaceticus</name>
    <dbReference type="NCBI Taxonomy" id="471"/>
    <lineage>
        <taxon>Bacteria</taxon>
        <taxon>Pseudomonadati</taxon>
        <taxon>Pseudomonadota</taxon>
        <taxon>Gammaproteobacteria</taxon>
        <taxon>Moraxellales</taxon>
        <taxon>Moraxellaceae</taxon>
        <taxon>Acinetobacter</taxon>
        <taxon>Acinetobacter calcoaceticus/baumannii complex</taxon>
    </lineage>
</organism>
<feature type="chain" id="PRO_0000098908" description="Tryptophan synthase beta chain">
    <location>
        <begin position="1"/>
        <end position="403"/>
    </location>
</feature>
<feature type="modified residue" description="N6-(pyridoxal phosphate)lysine" evidence="1">
    <location>
        <position position="93"/>
    </location>
</feature>